<dbReference type="EMBL" id="BA000003">
    <property type="protein sequence ID" value="BAB13209.1"/>
    <property type="molecule type" value="Genomic_DNA"/>
</dbReference>
<dbReference type="RefSeq" id="NP_240323.1">
    <property type="nucleotide sequence ID" value="NC_002528.1"/>
</dbReference>
<dbReference type="RefSeq" id="WP_010896146.1">
    <property type="nucleotide sequence ID" value="NC_002528.1"/>
</dbReference>
<dbReference type="SMR" id="P57583"/>
<dbReference type="STRING" id="563178.BUAP5A_509"/>
<dbReference type="EnsemblBacteria" id="BAB13209">
    <property type="protein sequence ID" value="BAB13209"/>
    <property type="gene ID" value="BAB13209"/>
</dbReference>
<dbReference type="KEGG" id="buc:BU516"/>
<dbReference type="PATRIC" id="fig|107806.10.peg.521"/>
<dbReference type="eggNOG" id="COG0255">
    <property type="taxonomic scope" value="Bacteria"/>
</dbReference>
<dbReference type="HOGENOM" id="CLU_158491_1_2_6"/>
<dbReference type="Proteomes" id="UP000001806">
    <property type="component" value="Chromosome"/>
</dbReference>
<dbReference type="GO" id="GO:1990904">
    <property type="term" value="C:ribonucleoprotein complex"/>
    <property type="evidence" value="ECO:0007669"/>
    <property type="project" value="UniProtKB-KW"/>
</dbReference>
<dbReference type="GO" id="GO:0005840">
    <property type="term" value="C:ribosome"/>
    <property type="evidence" value="ECO:0007669"/>
    <property type="project" value="UniProtKB-KW"/>
</dbReference>
<dbReference type="GO" id="GO:0003735">
    <property type="term" value="F:structural constituent of ribosome"/>
    <property type="evidence" value="ECO:0007669"/>
    <property type="project" value="InterPro"/>
</dbReference>
<dbReference type="GO" id="GO:0006412">
    <property type="term" value="P:translation"/>
    <property type="evidence" value="ECO:0007669"/>
    <property type="project" value="UniProtKB-UniRule"/>
</dbReference>
<dbReference type="CDD" id="cd00427">
    <property type="entry name" value="Ribosomal_L29_HIP"/>
    <property type="match status" value="1"/>
</dbReference>
<dbReference type="FunFam" id="1.10.287.310:FF:000001">
    <property type="entry name" value="50S ribosomal protein L29"/>
    <property type="match status" value="1"/>
</dbReference>
<dbReference type="Gene3D" id="6.10.140.1970">
    <property type="match status" value="1"/>
</dbReference>
<dbReference type="HAMAP" id="MF_00374">
    <property type="entry name" value="Ribosomal_uL29"/>
    <property type="match status" value="1"/>
</dbReference>
<dbReference type="InterPro" id="IPR001854">
    <property type="entry name" value="Ribosomal_uL29"/>
</dbReference>
<dbReference type="InterPro" id="IPR018254">
    <property type="entry name" value="Ribosomal_uL29_CS"/>
</dbReference>
<dbReference type="InterPro" id="IPR036049">
    <property type="entry name" value="Ribosomal_uL29_sf"/>
</dbReference>
<dbReference type="NCBIfam" id="TIGR00012">
    <property type="entry name" value="L29"/>
    <property type="match status" value="1"/>
</dbReference>
<dbReference type="Pfam" id="PF00831">
    <property type="entry name" value="Ribosomal_L29"/>
    <property type="match status" value="1"/>
</dbReference>
<dbReference type="SUPFAM" id="SSF46561">
    <property type="entry name" value="Ribosomal protein L29 (L29p)"/>
    <property type="match status" value="1"/>
</dbReference>
<dbReference type="PROSITE" id="PS00579">
    <property type="entry name" value="RIBOSOMAL_L29"/>
    <property type="match status" value="1"/>
</dbReference>
<name>RL29_BUCAI</name>
<accession>P57583</accession>
<proteinExistence type="inferred from homology"/>
<protein>
    <recommendedName>
        <fullName evidence="1">Large ribosomal subunit protein uL29</fullName>
    </recommendedName>
    <alternativeName>
        <fullName>50S ribosomal protein L29</fullName>
    </alternativeName>
</protein>
<sequence>MKALVEFRKKNKKDLYTELLQLLREQFNLRMQSVSGKLKQPHLLRKVRRNIAQVKTLLDSKEEIK</sequence>
<feature type="chain" id="PRO_0000130363" description="Large ribosomal subunit protein uL29">
    <location>
        <begin position="1"/>
        <end position="65"/>
    </location>
</feature>
<comment type="similarity">
    <text evidence="1">Belongs to the universal ribosomal protein uL29 family.</text>
</comment>
<evidence type="ECO:0000305" key="1"/>
<gene>
    <name type="primary">rpmC</name>
    <name type="ordered locus">BU516</name>
</gene>
<organism>
    <name type="scientific">Buchnera aphidicola subsp. Acyrthosiphon pisum (strain APS)</name>
    <name type="common">Acyrthosiphon pisum symbiotic bacterium</name>
    <dbReference type="NCBI Taxonomy" id="107806"/>
    <lineage>
        <taxon>Bacteria</taxon>
        <taxon>Pseudomonadati</taxon>
        <taxon>Pseudomonadota</taxon>
        <taxon>Gammaproteobacteria</taxon>
        <taxon>Enterobacterales</taxon>
        <taxon>Erwiniaceae</taxon>
        <taxon>Buchnera</taxon>
    </lineage>
</organism>
<keyword id="KW-1185">Reference proteome</keyword>
<keyword id="KW-0687">Ribonucleoprotein</keyword>
<keyword id="KW-0689">Ribosomal protein</keyword>
<reference key="1">
    <citation type="journal article" date="2000" name="Nature">
        <title>Genome sequence of the endocellular bacterial symbiont of aphids Buchnera sp. APS.</title>
        <authorList>
            <person name="Shigenobu S."/>
            <person name="Watanabe H."/>
            <person name="Hattori M."/>
            <person name="Sakaki Y."/>
            <person name="Ishikawa H."/>
        </authorList>
    </citation>
    <scope>NUCLEOTIDE SEQUENCE [LARGE SCALE GENOMIC DNA]</scope>
    <source>
        <strain>APS</strain>
    </source>
</reference>